<gene>
    <name evidence="1" type="primary">dcd</name>
    <name type="ordered locus">BCG_0361</name>
</gene>
<dbReference type="EC" id="3.5.4.30" evidence="1"/>
<dbReference type="EMBL" id="AM408590">
    <property type="protein sequence ID" value="CAL70346.1"/>
    <property type="molecule type" value="Genomic_DNA"/>
</dbReference>
<dbReference type="RefSeq" id="WP_003401638.1">
    <property type="nucleotide sequence ID" value="NC_008769.1"/>
</dbReference>
<dbReference type="SMR" id="A1KFE4"/>
<dbReference type="KEGG" id="mbb:BCG_0361"/>
<dbReference type="HOGENOM" id="CLU_087476_2_0_11"/>
<dbReference type="UniPathway" id="UPA00610">
    <property type="reaction ID" value="UER00667"/>
</dbReference>
<dbReference type="Proteomes" id="UP000001472">
    <property type="component" value="Chromosome"/>
</dbReference>
<dbReference type="GO" id="GO:0033973">
    <property type="term" value="F:dCTP deaminase (dUMP-forming) activity"/>
    <property type="evidence" value="ECO:0007669"/>
    <property type="project" value="UniProtKB-UniRule"/>
</dbReference>
<dbReference type="GO" id="GO:0008829">
    <property type="term" value="F:dCTP deaminase activity"/>
    <property type="evidence" value="ECO:0007669"/>
    <property type="project" value="InterPro"/>
</dbReference>
<dbReference type="GO" id="GO:0000166">
    <property type="term" value="F:nucleotide binding"/>
    <property type="evidence" value="ECO:0007669"/>
    <property type="project" value="UniProtKB-KW"/>
</dbReference>
<dbReference type="GO" id="GO:0006226">
    <property type="term" value="P:dUMP biosynthetic process"/>
    <property type="evidence" value="ECO:0007669"/>
    <property type="project" value="UniProtKB-UniRule"/>
</dbReference>
<dbReference type="GO" id="GO:0006229">
    <property type="term" value="P:dUTP biosynthetic process"/>
    <property type="evidence" value="ECO:0007669"/>
    <property type="project" value="InterPro"/>
</dbReference>
<dbReference type="GO" id="GO:0015949">
    <property type="term" value="P:nucleobase-containing small molecule interconversion"/>
    <property type="evidence" value="ECO:0007669"/>
    <property type="project" value="TreeGrafter"/>
</dbReference>
<dbReference type="CDD" id="cd07557">
    <property type="entry name" value="trimeric_dUTPase"/>
    <property type="match status" value="1"/>
</dbReference>
<dbReference type="FunFam" id="2.70.40.10:FF:000005">
    <property type="entry name" value="dCTP deaminase, dUMP-forming"/>
    <property type="match status" value="1"/>
</dbReference>
<dbReference type="Gene3D" id="2.70.40.10">
    <property type="match status" value="1"/>
</dbReference>
<dbReference type="HAMAP" id="MF_00146">
    <property type="entry name" value="dCTP_deaminase"/>
    <property type="match status" value="1"/>
</dbReference>
<dbReference type="InterPro" id="IPR011962">
    <property type="entry name" value="dCTP_deaminase"/>
</dbReference>
<dbReference type="InterPro" id="IPR036157">
    <property type="entry name" value="dUTPase-like_sf"/>
</dbReference>
<dbReference type="InterPro" id="IPR033704">
    <property type="entry name" value="dUTPase_trimeric"/>
</dbReference>
<dbReference type="NCBIfam" id="TIGR02274">
    <property type="entry name" value="dCTP_deam"/>
    <property type="match status" value="1"/>
</dbReference>
<dbReference type="PANTHER" id="PTHR42680">
    <property type="entry name" value="DCTP DEAMINASE"/>
    <property type="match status" value="1"/>
</dbReference>
<dbReference type="PANTHER" id="PTHR42680:SF3">
    <property type="entry name" value="DCTP DEAMINASE"/>
    <property type="match status" value="1"/>
</dbReference>
<dbReference type="Pfam" id="PF22769">
    <property type="entry name" value="DCD"/>
    <property type="match status" value="1"/>
</dbReference>
<dbReference type="SUPFAM" id="SSF51283">
    <property type="entry name" value="dUTPase-like"/>
    <property type="match status" value="1"/>
</dbReference>
<comment type="function">
    <text evidence="1">Bifunctional enzyme that catalyzes both the deamination of dCTP to dUTP and the hydrolysis of dUTP to dUMP without releasing the toxic dUTP intermediate.</text>
</comment>
<comment type="catalytic activity">
    <reaction evidence="1">
        <text>dCTP + 2 H2O = dUMP + NH4(+) + diphosphate</text>
        <dbReference type="Rhea" id="RHEA:19205"/>
        <dbReference type="ChEBI" id="CHEBI:15377"/>
        <dbReference type="ChEBI" id="CHEBI:28938"/>
        <dbReference type="ChEBI" id="CHEBI:33019"/>
        <dbReference type="ChEBI" id="CHEBI:61481"/>
        <dbReference type="ChEBI" id="CHEBI:246422"/>
        <dbReference type="EC" id="3.5.4.30"/>
    </reaction>
</comment>
<comment type="pathway">
    <text evidence="1">Pyrimidine metabolism; dUMP biosynthesis; dUMP from dCTP: step 1/1.</text>
</comment>
<comment type="subunit">
    <text evidence="1">Homotrimer.</text>
</comment>
<comment type="similarity">
    <text evidence="1">Belongs to the dCTP deaminase family.</text>
</comment>
<keyword id="KW-0378">Hydrolase</keyword>
<keyword id="KW-0546">Nucleotide metabolism</keyword>
<keyword id="KW-0547">Nucleotide-binding</keyword>
<organism>
    <name type="scientific">Mycobacterium bovis (strain BCG / Pasteur 1173P2)</name>
    <dbReference type="NCBI Taxonomy" id="410289"/>
    <lineage>
        <taxon>Bacteria</taxon>
        <taxon>Bacillati</taxon>
        <taxon>Actinomycetota</taxon>
        <taxon>Actinomycetes</taxon>
        <taxon>Mycobacteriales</taxon>
        <taxon>Mycobacteriaceae</taxon>
        <taxon>Mycobacterium</taxon>
        <taxon>Mycobacterium tuberculosis complex</taxon>
    </lineage>
</organism>
<accession>A1KFE4</accession>
<evidence type="ECO:0000255" key="1">
    <source>
        <dbReference type="HAMAP-Rule" id="MF_00146"/>
    </source>
</evidence>
<evidence type="ECO:0000256" key="2">
    <source>
        <dbReference type="SAM" id="MobiDB-lite"/>
    </source>
</evidence>
<name>DCDB_MYCBP</name>
<protein>
    <recommendedName>
        <fullName evidence="1">dCTP deaminase, dUMP-forming</fullName>
        <ecNumber evidence="1">3.5.4.30</ecNumber>
    </recommendedName>
    <alternativeName>
        <fullName evidence="1">Bifunctional dCTP deaminase:dUTPase</fullName>
    </alternativeName>
    <alternativeName>
        <fullName evidence="1">DCD-DUT</fullName>
    </alternativeName>
</protein>
<sequence length="190" mass="20810">MLLSDRDLRAEISSGRLGIDPFDDTLVQPSSIDVRLDCLFRVFNNTRYTHIDPAKQQDELTSLVQPVDGEPFVLHPGEFVLGSTLELFTLPDNLAGRLEGKSSLGRLGLLTHSTAGFIDPGFSGHITLELSNVANLPITLWPGMKIGQLCMLRLTSPSEHPYGSSRAGSKYQGQRGPTPSRSCQNFIRST</sequence>
<proteinExistence type="inferred from homology"/>
<feature type="chain" id="PRO_1000009757" description="dCTP deaminase, dUMP-forming">
    <location>
        <begin position="1"/>
        <end position="190"/>
    </location>
</feature>
<feature type="region of interest" description="Disordered" evidence="2">
    <location>
        <begin position="160"/>
        <end position="190"/>
    </location>
</feature>
<feature type="compositionally biased region" description="Polar residues" evidence="2">
    <location>
        <begin position="171"/>
        <end position="190"/>
    </location>
</feature>
<feature type="active site" description="Proton donor/acceptor" evidence="1">
    <location>
        <position position="129"/>
    </location>
</feature>
<feature type="binding site" evidence="1">
    <location>
        <begin position="101"/>
        <end position="106"/>
    </location>
    <ligand>
        <name>dCTP</name>
        <dbReference type="ChEBI" id="CHEBI:61481"/>
    </ligand>
</feature>
<feature type="binding site" evidence="1">
    <location>
        <position position="119"/>
    </location>
    <ligand>
        <name>dCTP</name>
        <dbReference type="ChEBI" id="CHEBI:61481"/>
    </ligand>
</feature>
<feature type="binding site" evidence="1">
    <location>
        <begin position="127"/>
        <end position="129"/>
    </location>
    <ligand>
        <name>dCTP</name>
        <dbReference type="ChEBI" id="CHEBI:61481"/>
    </ligand>
</feature>
<feature type="binding site" evidence="1">
    <location>
        <position position="148"/>
    </location>
    <ligand>
        <name>dCTP</name>
        <dbReference type="ChEBI" id="CHEBI:61481"/>
    </ligand>
</feature>
<feature type="binding site" evidence="1">
    <location>
        <position position="162"/>
    </location>
    <ligand>
        <name>dCTP</name>
        <dbReference type="ChEBI" id="CHEBI:61481"/>
    </ligand>
</feature>
<feature type="binding site" evidence="1">
    <location>
        <position position="170"/>
    </location>
    <ligand>
        <name>dCTP</name>
        <dbReference type="ChEBI" id="CHEBI:61481"/>
    </ligand>
</feature>
<feature type="binding site" evidence="1">
    <location>
        <position position="174"/>
    </location>
    <ligand>
        <name>dCTP</name>
        <dbReference type="ChEBI" id="CHEBI:61481"/>
    </ligand>
</feature>
<feature type="site" description="Important for bifunctional activity" evidence="1">
    <location>
        <begin position="116"/>
        <end position="117"/>
    </location>
</feature>
<reference key="1">
    <citation type="journal article" date="2007" name="Proc. Natl. Acad. Sci. U.S.A.">
        <title>Genome plasticity of BCG and impact on vaccine efficacy.</title>
        <authorList>
            <person name="Brosch R."/>
            <person name="Gordon S.V."/>
            <person name="Garnier T."/>
            <person name="Eiglmeier K."/>
            <person name="Frigui W."/>
            <person name="Valenti P."/>
            <person name="Dos Santos S."/>
            <person name="Duthoy S."/>
            <person name="Lacroix C."/>
            <person name="Garcia-Pelayo C."/>
            <person name="Inwald J.K."/>
            <person name="Golby P."/>
            <person name="Garcia J.N."/>
            <person name="Hewinson R.G."/>
            <person name="Behr M.A."/>
            <person name="Quail M.A."/>
            <person name="Churcher C."/>
            <person name="Barrell B.G."/>
            <person name="Parkhill J."/>
            <person name="Cole S.T."/>
        </authorList>
    </citation>
    <scope>NUCLEOTIDE SEQUENCE [LARGE SCALE GENOMIC DNA]</scope>
    <source>
        <strain>BCG / Pasteur 1173P2</strain>
    </source>
</reference>